<feature type="chain" id="PRO_1000000996" description="Dihydroxy-acid dehydratase">
    <location>
        <begin position="1"/>
        <end position="616"/>
    </location>
</feature>
<feature type="active site" description="Proton acceptor" evidence="1">
    <location>
        <position position="517"/>
    </location>
</feature>
<feature type="binding site" evidence="1">
    <location>
        <position position="81"/>
    </location>
    <ligand>
        <name>Mg(2+)</name>
        <dbReference type="ChEBI" id="CHEBI:18420"/>
    </ligand>
</feature>
<feature type="binding site" evidence="1">
    <location>
        <position position="122"/>
    </location>
    <ligand>
        <name>[2Fe-2S] cluster</name>
        <dbReference type="ChEBI" id="CHEBI:190135"/>
    </ligand>
</feature>
<feature type="binding site" evidence="1">
    <location>
        <position position="123"/>
    </location>
    <ligand>
        <name>Mg(2+)</name>
        <dbReference type="ChEBI" id="CHEBI:18420"/>
    </ligand>
</feature>
<feature type="binding site" description="via carbamate group" evidence="1">
    <location>
        <position position="124"/>
    </location>
    <ligand>
        <name>Mg(2+)</name>
        <dbReference type="ChEBI" id="CHEBI:18420"/>
    </ligand>
</feature>
<feature type="binding site" evidence="1">
    <location>
        <position position="195"/>
    </location>
    <ligand>
        <name>[2Fe-2S] cluster</name>
        <dbReference type="ChEBI" id="CHEBI:190135"/>
    </ligand>
</feature>
<feature type="binding site" evidence="1">
    <location>
        <position position="491"/>
    </location>
    <ligand>
        <name>Mg(2+)</name>
        <dbReference type="ChEBI" id="CHEBI:18420"/>
    </ligand>
</feature>
<feature type="modified residue" description="N6-carboxylysine" evidence="1">
    <location>
        <position position="124"/>
    </location>
</feature>
<keyword id="KW-0001">2Fe-2S</keyword>
<keyword id="KW-0028">Amino-acid biosynthesis</keyword>
<keyword id="KW-0100">Branched-chain amino acid biosynthesis</keyword>
<keyword id="KW-0408">Iron</keyword>
<keyword id="KW-0411">Iron-sulfur</keyword>
<keyword id="KW-0456">Lyase</keyword>
<keyword id="KW-0460">Magnesium</keyword>
<keyword id="KW-0479">Metal-binding</keyword>
<accession>A6TGF8</accession>
<sequence>MPKYRSATTTHGRNMAGARALWRATGMTDADFGKPIIAVVNSFTQFVPGHVHLRDLGKLVAEQIEAAGGVAKEFNTIAVDDGIAMGHGGMLYSLPSRELIADSVEYMVNAHCADAMVCISNCDKITPGMLMASLRLNIPVIFVSGGPMEAGKTKLSDKIIKLDLVDAMIQGADPKVSDEQSNQVERSACPTCGSCSGMFTANSMNCLTEALGLSQPGNGSLLATHADRKELFLNAGKRIVELTKRYYEQDDASALPRNIASKAAFENAMTLDIAMGGSTNTVLHLLAAAQEAEIDFTMSDIDKLSRKVPQLCKVAPSTQKYHMEDVHRAGGVLGILGELDRAGLLNREVKNVLGLTLPQTLEQYDVMVTQDDAVKKMFRAGPAGIRTTQAFSQDCRWDTLDDDRAEGCIRSLEHAYSKDGGLAVLYGNFAENGCIVKTAGVDDSILKFTGPAKVYESQDDAVEAILGGKVVEGDVVVIRYEGPKGGPGMQEMLYPTSFLKSMGLGKACALITDGRFSGGTSGLSIGHVSPEAASGGNIALIEDGDMIAIDIPNRSIQLQLSDAEIAARREAQEARGDQAWTPKNRQRQVSFALRAYASLATSADKGAVRDKSKLGG</sequence>
<gene>
    <name evidence="1" type="primary">ilvD</name>
    <name type="ordered locus">KPN78578_42180</name>
    <name type="ORF">KPN_04270</name>
</gene>
<reference key="1">
    <citation type="submission" date="2006-09" db="EMBL/GenBank/DDBJ databases">
        <authorList>
            <consortium name="The Klebsiella pneumonia Genome Sequencing Project"/>
            <person name="McClelland M."/>
            <person name="Sanderson E.K."/>
            <person name="Spieth J."/>
            <person name="Clifton W.S."/>
            <person name="Latreille P."/>
            <person name="Sabo A."/>
            <person name="Pepin K."/>
            <person name="Bhonagiri V."/>
            <person name="Porwollik S."/>
            <person name="Ali J."/>
            <person name="Wilson R.K."/>
        </authorList>
    </citation>
    <scope>NUCLEOTIDE SEQUENCE [LARGE SCALE GENOMIC DNA]</scope>
    <source>
        <strain>ATCC 700721 / MGH 78578</strain>
    </source>
</reference>
<evidence type="ECO:0000255" key="1">
    <source>
        <dbReference type="HAMAP-Rule" id="MF_00012"/>
    </source>
</evidence>
<organism>
    <name type="scientific">Klebsiella pneumoniae subsp. pneumoniae (strain ATCC 700721 / MGH 78578)</name>
    <dbReference type="NCBI Taxonomy" id="272620"/>
    <lineage>
        <taxon>Bacteria</taxon>
        <taxon>Pseudomonadati</taxon>
        <taxon>Pseudomonadota</taxon>
        <taxon>Gammaproteobacteria</taxon>
        <taxon>Enterobacterales</taxon>
        <taxon>Enterobacteriaceae</taxon>
        <taxon>Klebsiella/Raoultella group</taxon>
        <taxon>Klebsiella</taxon>
        <taxon>Klebsiella pneumoniae complex</taxon>
    </lineage>
</organism>
<name>ILVD_KLEP7</name>
<proteinExistence type="inferred from homology"/>
<dbReference type="EC" id="4.2.1.9" evidence="1"/>
<dbReference type="EMBL" id="CP000647">
    <property type="protein sequence ID" value="ABR79642.1"/>
    <property type="molecule type" value="Genomic_DNA"/>
</dbReference>
<dbReference type="RefSeq" id="WP_002883173.1">
    <property type="nucleotide sequence ID" value="NC_009648.1"/>
</dbReference>
<dbReference type="SMR" id="A6TGF8"/>
<dbReference type="STRING" id="272620.KPN_04270"/>
<dbReference type="PaxDb" id="272620-KPN_04270"/>
<dbReference type="EnsemblBacteria" id="ABR79642">
    <property type="protein sequence ID" value="ABR79642"/>
    <property type="gene ID" value="KPN_04270"/>
</dbReference>
<dbReference type="GeneID" id="69757847"/>
<dbReference type="KEGG" id="kpn:KPN_04270"/>
<dbReference type="HOGENOM" id="CLU_014271_4_2_6"/>
<dbReference type="UniPathway" id="UPA00047">
    <property type="reaction ID" value="UER00057"/>
</dbReference>
<dbReference type="UniPathway" id="UPA00049">
    <property type="reaction ID" value="UER00061"/>
</dbReference>
<dbReference type="Proteomes" id="UP000000265">
    <property type="component" value="Chromosome"/>
</dbReference>
<dbReference type="GO" id="GO:0005829">
    <property type="term" value="C:cytosol"/>
    <property type="evidence" value="ECO:0007669"/>
    <property type="project" value="TreeGrafter"/>
</dbReference>
<dbReference type="GO" id="GO:0051537">
    <property type="term" value="F:2 iron, 2 sulfur cluster binding"/>
    <property type="evidence" value="ECO:0007669"/>
    <property type="project" value="UniProtKB-UniRule"/>
</dbReference>
<dbReference type="GO" id="GO:0004160">
    <property type="term" value="F:dihydroxy-acid dehydratase activity"/>
    <property type="evidence" value="ECO:0007669"/>
    <property type="project" value="UniProtKB-UniRule"/>
</dbReference>
<dbReference type="GO" id="GO:0000287">
    <property type="term" value="F:magnesium ion binding"/>
    <property type="evidence" value="ECO:0007669"/>
    <property type="project" value="UniProtKB-UniRule"/>
</dbReference>
<dbReference type="GO" id="GO:0009097">
    <property type="term" value="P:isoleucine biosynthetic process"/>
    <property type="evidence" value="ECO:0007669"/>
    <property type="project" value="UniProtKB-UniRule"/>
</dbReference>
<dbReference type="GO" id="GO:0009099">
    <property type="term" value="P:L-valine biosynthetic process"/>
    <property type="evidence" value="ECO:0007669"/>
    <property type="project" value="UniProtKB-UniRule"/>
</dbReference>
<dbReference type="FunFam" id="3.50.30.80:FF:000001">
    <property type="entry name" value="Dihydroxy-acid dehydratase"/>
    <property type="match status" value="1"/>
</dbReference>
<dbReference type="Gene3D" id="3.50.30.80">
    <property type="entry name" value="IlvD/EDD C-terminal domain-like"/>
    <property type="match status" value="1"/>
</dbReference>
<dbReference type="HAMAP" id="MF_00012">
    <property type="entry name" value="IlvD"/>
    <property type="match status" value="1"/>
</dbReference>
<dbReference type="InterPro" id="IPR042096">
    <property type="entry name" value="Dihydro-acid_dehy_C"/>
</dbReference>
<dbReference type="InterPro" id="IPR004404">
    <property type="entry name" value="DihydroxyA_deHydtase"/>
</dbReference>
<dbReference type="InterPro" id="IPR020558">
    <property type="entry name" value="DiOHA_6PGluconate_deHydtase_CS"/>
</dbReference>
<dbReference type="InterPro" id="IPR056740">
    <property type="entry name" value="ILV_EDD_C"/>
</dbReference>
<dbReference type="InterPro" id="IPR000581">
    <property type="entry name" value="ILV_EDD_N"/>
</dbReference>
<dbReference type="InterPro" id="IPR037237">
    <property type="entry name" value="IlvD/EDD_N"/>
</dbReference>
<dbReference type="NCBIfam" id="TIGR00110">
    <property type="entry name" value="ilvD"/>
    <property type="match status" value="1"/>
</dbReference>
<dbReference type="NCBIfam" id="NF009103">
    <property type="entry name" value="PRK12448.1"/>
    <property type="match status" value="1"/>
</dbReference>
<dbReference type="PANTHER" id="PTHR43661">
    <property type="entry name" value="D-XYLONATE DEHYDRATASE"/>
    <property type="match status" value="1"/>
</dbReference>
<dbReference type="PANTHER" id="PTHR43661:SF3">
    <property type="entry name" value="D-XYLONATE DEHYDRATASE YAGF-RELATED"/>
    <property type="match status" value="1"/>
</dbReference>
<dbReference type="Pfam" id="PF24877">
    <property type="entry name" value="ILV_EDD_C"/>
    <property type="match status" value="1"/>
</dbReference>
<dbReference type="Pfam" id="PF00920">
    <property type="entry name" value="ILVD_EDD_N"/>
    <property type="match status" value="1"/>
</dbReference>
<dbReference type="SUPFAM" id="SSF143975">
    <property type="entry name" value="IlvD/EDD N-terminal domain-like"/>
    <property type="match status" value="1"/>
</dbReference>
<dbReference type="SUPFAM" id="SSF52016">
    <property type="entry name" value="LeuD/IlvD-like"/>
    <property type="match status" value="1"/>
</dbReference>
<dbReference type="PROSITE" id="PS00886">
    <property type="entry name" value="ILVD_EDD_1"/>
    <property type="match status" value="1"/>
</dbReference>
<dbReference type="PROSITE" id="PS00887">
    <property type="entry name" value="ILVD_EDD_2"/>
    <property type="match status" value="1"/>
</dbReference>
<comment type="function">
    <text evidence="1">Functions in the biosynthesis of branched-chain amino acids. Catalyzes the dehydration of (2R,3R)-2,3-dihydroxy-3-methylpentanoate (2,3-dihydroxy-3-methylvalerate) into 2-oxo-3-methylpentanoate (2-oxo-3-methylvalerate) and of (2R)-2,3-dihydroxy-3-methylbutanoate (2,3-dihydroxyisovalerate) into 2-oxo-3-methylbutanoate (2-oxoisovalerate), the penultimate precursor to L-isoleucine and L-valine, respectively.</text>
</comment>
<comment type="catalytic activity">
    <reaction evidence="1">
        <text>(2R)-2,3-dihydroxy-3-methylbutanoate = 3-methyl-2-oxobutanoate + H2O</text>
        <dbReference type="Rhea" id="RHEA:24809"/>
        <dbReference type="ChEBI" id="CHEBI:11851"/>
        <dbReference type="ChEBI" id="CHEBI:15377"/>
        <dbReference type="ChEBI" id="CHEBI:49072"/>
        <dbReference type="EC" id="4.2.1.9"/>
    </reaction>
    <physiologicalReaction direction="left-to-right" evidence="1">
        <dbReference type="Rhea" id="RHEA:24810"/>
    </physiologicalReaction>
</comment>
<comment type="catalytic activity">
    <reaction evidence="1">
        <text>(2R,3R)-2,3-dihydroxy-3-methylpentanoate = (S)-3-methyl-2-oxopentanoate + H2O</text>
        <dbReference type="Rhea" id="RHEA:27694"/>
        <dbReference type="ChEBI" id="CHEBI:15377"/>
        <dbReference type="ChEBI" id="CHEBI:35146"/>
        <dbReference type="ChEBI" id="CHEBI:49258"/>
        <dbReference type="EC" id="4.2.1.9"/>
    </reaction>
    <physiologicalReaction direction="left-to-right" evidence="1">
        <dbReference type="Rhea" id="RHEA:27695"/>
    </physiologicalReaction>
</comment>
<comment type="cofactor">
    <cofactor evidence="1">
        <name>[2Fe-2S] cluster</name>
        <dbReference type="ChEBI" id="CHEBI:190135"/>
    </cofactor>
    <text evidence="1">Binds 1 [2Fe-2S] cluster per subunit. This cluster acts as a Lewis acid cofactor.</text>
</comment>
<comment type="cofactor">
    <cofactor evidence="1">
        <name>Mg(2+)</name>
        <dbReference type="ChEBI" id="CHEBI:18420"/>
    </cofactor>
</comment>
<comment type="pathway">
    <text evidence="1">Amino-acid biosynthesis; L-isoleucine biosynthesis; L-isoleucine from 2-oxobutanoate: step 3/4.</text>
</comment>
<comment type="pathway">
    <text evidence="1">Amino-acid biosynthesis; L-valine biosynthesis; L-valine from pyruvate: step 3/4.</text>
</comment>
<comment type="subunit">
    <text evidence="1">Homodimer.</text>
</comment>
<comment type="similarity">
    <text evidence="1">Belongs to the IlvD/Edd family.</text>
</comment>
<protein>
    <recommendedName>
        <fullName evidence="1">Dihydroxy-acid dehydratase</fullName>
        <shortName evidence="1">DAD</shortName>
        <ecNumber evidence="1">4.2.1.9</ecNumber>
    </recommendedName>
</protein>